<accession>O27433</accession>
<evidence type="ECO:0000255" key="1">
    <source>
        <dbReference type="HAMAP-Rule" id="MF_00051"/>
    </source>
</evidence>
<evidence type="ECO:0000269" key="2">
    <source ref="2"/>
</evidence>
<evidence type="ECO:0000305" key="3"/>
<comment type="function">
    <text evidence="2">Catalyzes the reversible interconversion of serine and glycine with tetrahydromethanopterin (H4MPT) serving as the one-carbon carrier. Cannot use tetrahydrofolate (THF or H4PteGlu) instead of H4MPT as the pteridine substrate. Also probably exhibits a pteridine-independent aldolase activity toward beta-hydroxyamino acids, producing glycine and aldehydes, via a retro-aldol mechanism.</text>
</comment>
<comment type="catalytic activity">
    <reaction evidence="1 2">
        <text>5,10-methylenetetrahydromethanopterin + glycine + H2O = 5,6,7,8-tetrahydromethanopterin + L-serine</text>
        <dbReference type="Rhea" id="RHEA:47104"/>
        <dbReference type="ChEBI" id="CHEBI:15377"/>
        <dbReference type="ChEBI" id="CHEBI:33384"/>
        <dbReference type="ChEBI" id="CHEBI:57305"/>
        <dbReference type="ChEBI" id="CHEBI:57818"/>
        <dbReference type="ChEBI" id="CHEBI:58103"/>
    </reaction>
</comment>
<comment type="cofactor">
    <cofactor evidence="1 2">
        <name>pyridoxal 5'-phosphate</name>
        <dbReference type="ChEBI" id="CHEBI:597326"/>
    </cofactor>
</comment>
<comment type="biophysicochemical properties">
    <phDependence>
        <text evidence="2">Optimum pH is 8.1.</text>
    </phDependence>
    <temperatureDependence>
        <text evidence="2">Optimum temperature is 60 degrees Celsius.</text>
    </temperatureDependence>
</comment>
<comment type="pathway">
    <text evidence="1">Amino-acid biosynthesis; glycine biosynthesis; glycine from L-serine: step 1/1.</text>
</comment>
<comment type="subunit">
    <text evidence="1 2">Homodimer.</text>
</comment>
<comment type="subcellular location">
    <subcellularLocation>
        <location evidence="1">Cytoplasm</location>
    </subcellularLocation>
</comment>
<comment type="similarity">
    <text evidence="1 3">Belongs to the SHMT family.</text>
</comment>
<comment type="sequence caution" evidence="3">
    <conflict type="erroneous initiation">
        <sequence resource="EMBL-CDS" id="AAB85857"/>
    </conflict>
    <text>Extended N-terminus.</text>
</comment>
<proteinExistence type="evidence at protein level"/>
<feature type="chain" id="PRO_0000113716" description="Serine hydroxymethyltransferase">
    <location>
        <begin position="1"/>
        <end position="423"/>
    </location>
</feature>
<feature type="binding site" evidence="1">
    <location>
        <begin position="121"/>
        <end position="123"/>
    </location>
    <ligand>
        <name>(6S)-5,6,7,8-tetrahydrofolate</name>
        <dbReference type="ChEBI" id="CHEBI:57453"/>
    </ligand>
</feature>
<feature type="binding site" evidence="1">
    <location>
        <position position="242"/>
    </location>
    <ligand>
        <name>(6S)-5,6,7,8-tetrahydrofolate</name>
        <dbReference type="ChEBI" id="CHEBI:57453"/>
    </ligand>
</feature>
<feature type="site" description="Plays an important role in substrate specificity" evidence="1">
    <location>
        <position position="226"/>
    </location>
</feature>
<feature type="modified residue" description="N6-(pyridoxal phosphate)lysine" evidence="1">
    <location>
        <position position="227"/>
    </location>
</feature>
<keyword id="KW-0028">Amino-acid biosynthesis</keyword>
<keyword id="KW-0963">Cytoplasm</keyword>
<keyword id="KW-0554">One-carbon metabolism</keyword>
<keyword id="KW-0663">Pyridoxal phosphate</keyword>
<keyword id="KW-1185">Reference proteome</keyword>
<keyword id="KW-0808">Transferase</keyword>
<name>GLYA_METTH</name>
<reference key="1">
    <citation type="journal article" date="1997" name="J. Bacteriol.">
        <title>Complete genome sequence of Methanobacterium thermoautotrophicum deltaH: functional analysis and comparative genomics.</title>
        <authorList>
            <person name="Smith D.R."/>
            <person name="Doucette-Stamm L.A."/>
            <person name="Deloughery C."/>
            <person name="Lee H.-M."/>
            <person name="Dubois J."/>
            <person name="Aldredge T."/>
            <person name="Bashirzadeh R."/>
            <person name="Blakely D."/>
            <person name="Cook R."/>
            <person name="Gilbert K."/>
            <person name="Harrison D."/>
            <person name="Hoang L."/>
            <person name="Keagle P."/>
            <person name="Lumm W."/>
            <person name="Pothier B."/>
            <person name="Qiu D."/>
            <person name="Spadafora R."/>
            <person name="Vicare R."/>
            <person name="Wang Y."/>
            <person name="Wierzbowski J."/>
            <person name="Gibson R."/>
            <person name="Jiwani N."/>
            <person name="Caruso A."/>
            <person name="Bush D."/>
            <person name="Safer H."/>
            <person name="Patwell D."/>
            <person name="Prabhakar S."/>
            <person name="McDougall S."/>
            <person name="Shimer G."/>
            <person name="Goyal A."/>
            <person name="Pietrovski S."/>
            <person name="Church G.M."/>
            <person name="Daniels C.J."/>
            <person name="Mao J.-I."/>
            <person name="Rice P."/>
            <person name="Noelling J."/>
            <person name="Reeve J.N."/>
        </authorList>
    </citation>
    <scope>NUCLEOTIDE SEQUENCE [LARGE SCALE GENOMIC DNA]</scope>
    <source>
        <strain>ATCC 29096 / DSM 1053 / JCM 10044 / NBRC 100330 / Delta H</strain>
    </source>
</reference>
<reference key="2">
    <citation type="journal article" date="1986" name="Arch. Microbiol.">
        <title>Tetrahydromethanopterin-dependent serine transhydroxymethylase from Methanobacterium thermoautotrophicum.</title>
        <authorList>
            <person name="Hoyt J.C."/>
            <person name="Oren A."/>
            <person name="Escalante-Semerena J.C."/>
            <person name="Wolfe R.S."/>
        </authorList>
    </citation>
    <scope>FUNCTION</scope>
    <scope>H4MPT-DEPENDENT SERINE HYDROXYMETHYLTRANSFERASE ACTIVITY</scope>
    <scope>CATALYTIC ACTIVITY</scope>
    <scope>COFACTOR</scope>
    <scope>SUBSTRATE SPECIFICITY</scope>
    <scope>BIOPHYSICOCHEMICAL PROPERTIES</scope>
    <scope>SUBUNIT</scope>
    <source>
        <strain>strain ATCC 29096 / DSM 1053 / JCM 10044 / NBRC 100330 / Delta H</strain>
    </source>
</reference>
<gene>
    <name evidence="1" type="primary">glyA</name>
    <name type="ordered locus">MTH_1380</name>
</gene>
<protein>
    <recommendedName>
        <fullName evidence="1">Serine hydroxymethyltransferase</fullName>
        <shortName evidence="1">SHMT</shortName>
        <shortName evidence="1">Serine methylase</shortName>
        <ecNumber evidence="1 2">2.1.2.-</ecNumber>
    </recommendedName>
</protein>
<sequence length="423" mass="47223">MVSNQDYTEKIRQLMKDHNSWMESSINLIASENITSSRVKEALLSDLSHRYAEGLPGERLYEGCRYIDEIEELTIELSKRLFRAEHANVQPTSGVVANLACFFATAEVGDPIMAMEVPYGGHISHARVSAAGVRGFQIYTHPFDFENMNIDADAMKKKILEVKPRIILFGGSLFLFPHPVEEALEAAEEVGARIMYDGAHVLGLIAGGYFQDPLREGADMLVGSTHKTFPGPQGGIILCREELAADIDEAVFPGLVSNHHLHHVAGLGIATAEMLEFGAEYAAQTINNARKLAENLHELGFNVLCEHLDFTESHQVVMDVSDIGRAAEISKRLEANNIILNKNLLPWDDVNRSDDPSGIRIGTQEITRRGMKESEMSEVAEYIKRVVMDGKDVRDEVAEFMSSYTRVHYAFEDSEAYKYMEIQ</sequence>
<organism>
    <name type="scientific">Methanothermobacter thermautotrophicus (strain ATCC 29096 / DSM 1053 / JCM 10044 / NBRC 100330 / Delta H)</name>
    <name type="common">Methanobacterium thermoautotrophicum</name>
    <dbReference type="NCBI Taxonomy" id="187420"/>
    <lineage>
        <taxon>Archaea</taxon>
        <taxon>Methanobacteriati</taxon>
        <taxon>Methanobacteriota</taxon>
        <taxon>Methanomada group</taxon>
        <taxon>Methanobacteria</taxon>
        <taxon>Methanobacteriales</taxon>
        <taxon>Methanobacteriaceae</taxon>
        <taxon>Methanothermobacter</taxon>
    </lineage>
</organism>
<dbReference type="EC" id="2.1.2.-" evidence="1 2"/>
<dbReference type="EMBL" id="AE000666">
    <property type="protein sequence ID" value="AAB85857.1"/>
    <property type="status" value="ALT_INIT"/>
    <property type="molecule type" value="Genomic_DNA"/>
</dbReference>
<dbReference type="PIR" id="F69050">
    <property type="entry name" value="F69050"/>
</dbReference>
<dbReference type="RefSeq" id="WP_048061037.1">
    <property type="nucleotide sequence ID" value="NC_000916.1"/>
</dbReference>
<dbReference type="SMR" id="O27433"/>
<dbReference type="FunCoup" id="O27433">
    <property type="interactions" value="316"/>
</dbReference>
<dbReference type="STRING" id="187420.MTH_1380"/>
<dbReference type="PaxDb" id="187420-MTH_1380"/>
<dbReference type="EnsemblBacteria" id="AAB85857">
    <property type="protein sequence ID" value="AAB85857"/>
    <property type="gene ID" value="MTH_1380"/>
</dbReference>
<dbReference type="GeneID" id="82297818"/>
<dbReference type="KEGG" id="mth:MTH_1380"/>
<dbReference type="PATRIC" id="fig|187420.15.peg.1345"/>
<dbReference type="HOGENOM" id="CLU_022477_2_1_2"/>
<dbReference type="InParanoid" id="O27433"/>
<dbReference type="UniPathway" id="UPA00288">
    <property type="reaction ID" value="UER01023"/>
</dbReference>
<dbReference type="Proteomes" id="UP000005223">
    <property type="component" value="Chromosome"/>
</dbReference>
<dbReference type="GO" id="GO:0005737">
    <property type="term" value="C:cytoplasm"/>
    <property type="evidence" value="ECO:0007669"/>
    <property type="project" value="UniProtKB-SubCell"/>
</dbReference>
<dbReference type="GO" id="GO:0004372">
    <property type="term" value="F:glycine hydroxymethyltransferase activity"/>
    <property type="evidence" value="ECO:0007669"/>
    <property type="project" value="UniProtKB-UniRule"/>
</dbReference>
<dbReference type="GO" id="GO:0030170">
    <property type="term" value="F:pyridoxal phosphate binding"/>
    <property type="evidence" value="ECO:0007669"/>
    <property type="project" value="UniProtKB-UniRule"/>
</dbReference>
<dbReference type="GO" id="GO:0019264">
    <property type="term" value="P:glycine biosynthetic process from serine"/>
    <property type="evidence" value="ECO:0007669"/>
    <property type="project" value="UniProtKB-UniRule"/>
</dbReference>
<dbReference type="GO" id="GO:0035999">
    <property type="term" value="P:tetrahydrofolate interconversion"/>
    <property type="evidence" value="ECO:0007669"/>
    <property type="project" value="InterPro"/>
</dbReference>
<dbReference type="CDD" id="cd00378">
    <property type="entry name" value="SHMT"/>
    <property type="match status" value="1"/>
</dbReference>
<dbReference type="FunFam" id="3.40.640.10:FF:000101">
    <property type="entry name" value="Serine hydroxymethyltransferase"/>
    <property type="match status" value="1"/>
</dbReference>
<dbReference type="Gene3D" id="3.90.1150.10">
    <property type="entry name" value="Aspartate Aminotransferase, domain 1"/>
    <property type="match status" value="1"/>
</dbReference>
<dbReference type="Gene3D" id="3.40.640.10">
    <property type="entry name" value="Type I PLP-dependent aspartate aminotransferase-like (Major domain)"/>
    <property type="match status" value="1"/>
</dbReference>
<dbReference type="HAMAP" id="MF_00051">
    <property type="entry name" value="SHMT"/>
    <property type="match status" value="1"/>
</dbReference>
<dbReference type="InterPro" id="IPR015424">
    <property type="entry name" value="PyrdxlP-dep_Trfase"/>
</dbReference>
<dbReference type="InterPro" id="IPR015421">
    <property type="entry name" value="PyrdxlP-dep_Trfase_major"/>
</dbReference>
<dbReference type="InterPro" id="IPR015422">
    <property type="entry name" value="PyrdxlP-dep_Trfase_small"/>
</dbReference>
<dbReference type="InterPro" id="IPR001085">
    <property type="entry name" value="Ser_HO-MeTrfase"/>
</dbReference>
<dbReference type="InterPro" id="IPR049943">
    <property type="entry name" value="Ser_HO-MeTrfase-like"/>
</dbReference>
<dbReference type="InterPro" id="IPR019798">
    <property type="entry name" value="Ser_HO-MeTrfase_PLP_BS"/>
</dbReference>
<dbReference type="InterPro" id="IPR039429">
    <property type="entry name" value="SHMT-like_dom"/>
</dbReference>
<dbReference type="NCBIfam" id="NF000586">
    <property type="entry name" value="PRK00011.1"/>
    <property type="match status" value="1"/>
</dbReference>
<dbReference type="PANTHER" id="PTHR11680">
    <property type="entry name" value="SERINE HYDROXYMETHYLTRANSFERASE"/>
    <property type="match status" value="1"/>
</dbReference>
<dbReference type="PANTHER" id="PTHR11680:SF35">
    <property type="entry name" value="SERINE HYDROXYMETHYLTRANSFERASE 1"/>
    <property type="match status" value="1"/>
</dbReference>
<dbReference type="Pfam" id="PF00464">
    <property type="entry name" value="SHMT"/>
    <property type="match status" value="1"/>
</dbReference>
<dbReference type="PIRSF" id="PIRSF000412">
    <property type="entry name" value="SHMT"/>
    <property type="match status" value="1"/>
</dbReference>
<dbReference type="SUPFAM" id="SSF53383">
    <property type="entry name" value="PLP-dependent transferases"/>
    <property type="match status" value="1"/>
</dbReference>
<dbReference type="PROSITE" id="PS00096">
    <property type="entry name" value="SHMT"/>
    <property type="match status" value="1"/>
</dbReference>